<sequence length="1770" mass="196531">MFNRSNTAGGSQAMKEGLGINKLSPISSNSNPSSLTSSNYEKYLQLATEKNPCMILELELDGKVRYGSPQWNTITGVADDSGSSPTYIADLILGSDQDKGVFQKATDMLLMNDDTSCTITFKIKAADYEGSAGCDDESTITTLEARGILIRDGHTQLPSHTMWIVKPRTNDWSDFYANEDAQDDMVIQLSDNCDDIDIQLPEEFAKTLGFGAKIFVQYLKRIRLEMIIDEFNLPLPKMELCRVCENFVPVWWLETHSQSCVCEHRTESLIQLLHDNLLEQQAILANFTKDSEYKGSQIQVRSNNFLNQVLDSLRELCQDAIDINPSEMVPDLYHSLSTFPQDNGNNNNNNNNNNNNNNALLDQFPIQKDTVSLNSYFQFSPRTNHNIQNVTSWQSRFFLNDDQDPGLALLIHDTLDLARKKVDAVLRLDNAMTYSLKIKNEVNNYVVQLIREQIEINKHAILTHPMNLRSSSIFHSPLPQIHSQQPEAENLIYSSSTPLQVQHDQCASFEAPSKSHLEPIPFPVSSIEETPTANDIRHPSPLPRSCSNTVMKLPTPRRKLDSNGLFSDAYLNADIIPNPSIESTISIDRDNNTNSRGSSMKQYGIGEATDSRTSNSERPSSSSSRLGIRSRSITPRQKIEYSHVDNDDRTNEMLSRDKDSLQPQPSVDTTITSSTQATTTGTKTNSNNSTNSVLPKLMTSISLTPRRGSPSFGNLASHSMQQTNSFKLIHDKSPISSPFTFSKDFLTPEQHPSNIARTDSINNAMLTSPNMPLSPLLLATNQTVKSPTPSIKDYDILKPISKGAYGSVYLARKKLTGDYFAIKVLRKSDMIAKNQVTNVKSERAIMMVQSDKPYVARLFASFQNKDNLFLVMEYLPGGDLATLIKMMGYLPDQWAKQYLTEIVVGVNDMHQNGIIHHDLKPENLLIDNAGHVKLTDFGLSRAGLIRRHKFVPHKSSLSISSTLPIDNPANNFTMNNNNSNHSQLSTPDSFTSDHKQYNRSKKSSLGQQYEHSEYSSTSNSHSMTPTPSTNTVVYPSYYRGKDRSHGSSNIDLPASLRRSESQLSFSLLDISRSSTPPLANPTNSNANNIMRRKSLTENKSFSNDLLSSDAIAATNTNINSNNNISLSPAPSDLALFYPDDSKQNKKFFGTPDYLAPETIEGKGEDNKQCDWWSVGCIFFELLLGYPPFHAETPDAVFKKILSGVIQWPEFKNEEEEREFLTPEAKDLIEKLLVVDPAKRLGAKGIQEIKDHPYFKNVDWDHVYDEEASFVPTIDNPEDTDYFDLRGAELQDFGDDIENDNANILFGKHGINTDVSELSAANLSPPLNHKNILSRKLSMSNTTNRSSNNSNSSVHDFGAHTPVNKLSIASVLESVPQETGYITPNGTGTTTTSAKNSPNLKNLSLAIPPHMRDRRSSKLNDSQTEFGSFNFRNLSALDKANKDAINRLKSEHFSEQPGVHRRTSSASLMGSSSDGSVSTPGSNASNTTSGGKLKIHKPTISGSPSTFGTFPKTFLRSDSFSTRSYSPERSISIDSSTLSRKGSIIGDNQQTTANSSDSPTMTKFKSPLSPANTTTVSSYFSRQRVLSKSFSQRTNSSDLSAEESDRLQAISRVNSLRNRRRSGRKSSSTSEIGYHMDVLVCEPIPIHRYRVTKDLENLGCTVVSVGAGDELVSRATSGVSFDLIMTALKLPKLGAIDIVQLLKQTNGANSTTPIVAITNYFQEAATSRVFDDVLEKPVKLDELKKLVAKYALKKSQEDEEHTILSDSDETH</sequence>
<protein>
    <recommendedName>
        <fullName>Serine/threonine-protein kinase RIM15</fullName>
        <ecNumber>2.7.11.1</ecNumber>
    </recommendedName>
</protein>
<accession>P43565</accession>
<accession>D6VTJ8</accession>
<gene>
    <name type="primary">RIM15</name>
    <name type="synonym">TAK1</name>
    <name type="ordered locus">YFL033C</name>
</gene>
<organism>
    <name type="scientific">Saccharomyces cerevisiae (strain ATCC 204508 / S288c)</name>
    <name type="common">Baker's yeast</name>
    <dbReference type="NCBI Taxonomy" id="559292"/>
    <lineage>
        <taxon>Eukaryota</taxon>
        <taxon>Fungi</taxon>
        <taxon>Dikarya</taxon>
        <taxon>Ascomycota</taxon>
        <taxon>Saccharomycotina</taxon>
        <taxon>Saccharomycetes</taxon>
        <taxon>Saccharomycetales</taxon>
        <taxon>Saccharomycetaceae</taxon>
        <taxon>Saccharomyces</taxon>
    </lineage>
</organism>
<reference key="1">
    <citation type="journal article" date="1995" name="Nat. Genet.">
        <title>Analysis of the nucleotide sequence of chromosome VI from Saccharomyces cerevisiae.</title>
        <authorList>
            <person name="Murakami Y."/>
            <person name="Naitou M."/>
            <person name="Hagiwara H."/>
            <person name="Shibata T."/>
            <person name="Ozawa M."/>
            <person name="Sasanuma S."/>
            <person name="Sasanuma M."/>
            <person name="Tsuchiya Y."/>
            <person name="Soeda E."/>
            <person name="Yokoyama K."/>
            <person name="Yamazaki M."/>
            <person name="Tashiro H."/>
            <person name="Eki T."/>
        </authorList>
    </citation>
    <scope>NUCLEOTIDE SEQUENCE [LARGE SCALE GENOMIC DNA]</scope>
    <source>
        <strain>ATCC 204508 / S288c</strain>
    </source>
</reference>
<reference key="2">
    <citation type="journal article" date="2014" name="G3 (Bethesda)">
        <title>The reference genome sequence of Saccharomyces cerevisiae: Then and now.</title>
        <authorList>
            <person name="Engel S.R."/>
            <person name="Dietrich F.S."/>
            <person name="Fisk D.G."/>
            <person name="Binkley G."/>
            <person name="Balakrishnan R."/>
            <person name="Costanzo M.C."/>
            <person name="Dwight S.S."/>
            <person name="Hitz B.C."/>
            <person name="Karra K."/>
            <person name="Nash R.S."/>
            <person name="Weng S."/>
            <person name="Wong E.D."/>
            <person name="Lloyd P."/>
            <person name="Skrzypek M.S."/>
            <person name="Miyasato S.R."/>
            <person name="Simison M."/>
            <person name="Cherry J.M."/>
        </authorList>
    </citation>
    <scope>GENOME REANNOTATION</scope>
    <source>
        <strain>ATCC 204508 / S288c</strain>
    </source>
</reference>
<reference key="3">
    <citation type="journal article" date="1997" name="Mol. Cell. Biol.">
        <title>Stimulation of yeast meiotic gene expression by the glucose-repressible protein kinase Rim15p.</title>
        <authorList>
            <person name="Vidan S."/>
            <person name="Mitchell A.P."/>
        </authorList>
    </citation>
    <scope>NUCLEOTIDE SEQUENCE [GENOMIC DNA]</scope>
    <scope>CHARACTERIZATION</scope>
</reference>
<reference key="4">
    <citation type="journal article" date="1998" name="Genes Dev.">
        <title>Saccharomyces cerevisiae cAMP-dependent protein kinase controls entry into stationary phase through the Rim15p protein kinase.</title>
        <authorList>
            <person name="Reinders A."/>
            <person name="Buerckert N."/>
            <person name="Boller T."/>
            <person name="Wiemken A."/>
            <person name="De Virgilio C."/>
        </authorList>
    </citation>
    <scope>NUCLEOTIDE SEQUENCE [GENOMIC DNA]</scope>
    <scope>FUNCTION</scope>
    <scope>ACTIVITY REGULATION</scope>
    <scope>MUTAGENESIS OF LYS-823</scope>
</reference>
<reference key="5">
    <citation type="journal article" date="2005" name="EMBO J.">
        <title>Regulation of G0 entry by the Pho80-Pho85 cyclin-CDK complex.</title>
        <authorList>
            <person name="Wanke V."/>
            <person name="Pedruzzi I."/>
            <person name="Cameroni E."/>
            <person name="Dubouloz F."/>
            <person name="De Virgilio C."/>
        </authorList>
    </citation>
    <scope>FUNCTION</scope>
    <scope>PHOSPHORYLATION AT THR-1075</scope>
    <scope>SUBCELLULAR LOCATION</scope>
</reference>
<reference key="6">
    <citation type="journal article" date="2007" name="J. Proteome Res.">
        <title>Large-scale phosphorylation analysis of alpha-factor-arrested Saccharomyces cerevisiae.</title>
        <authorList>
            <person name="Li X."/>
            <person name="Gerber S.A."/>
            <person name="Rudner A.D."/>
            <person name="Beausoleil S.A."/>
            <person name="Haas W."/>
            <person name="Villen J."/>
            <person name="Elias J.E."/>
            <person name="Gygi S.P."/>
        </authorList>
    </citation>
    <scope>PHOSPHORYLATION [LARGE SCALE ANALYSIS] AT SER-733 AND SER-1764</scope>
    <scope>IDENTIFICATION BY MASS SPECTROMETRY [LARGE SCALE ANALYSIS]</scope>
    <source>
        <strain>ADR376</strain>
    </source>
</reference>
<reference key="7">
    <citation type="journal article" date="2008" name="Mol. Cell. Proteomics">
        <title>A multidimensional chromatography technology for in-depth phosphoproteome analysis.</title>
        <authorList>
            <person name="Albuquerque C.P."/>
            <person name="Smolka M.B."/>
            <person name="Payne S.H."/>
            <person name="Bafna V."/>
            <person name="Eng J."/>
            <person name="Zhou H."/>
        </authorList>
    </citation>
    <scope>PHOSPHORYLATION [LARGE SCALE ANALYSIS] AT SER-380; SER-476; THR-704 AND THR-747</scope>
    <scope>IDENTIFICATION BY MASS SPECTROMETRY [LARGE SCALE ANALYSIS]</scope>
</reference>
<reference key="8">
    <citation type="journal article" date="2009" name="Science">
        <title>Global analysis of Cdk1 substrate phosphorylation sites provides insights into evolution.</title>
        <authorList>
            <person name="Holt L.J."/>
            <person name="Tuch B.B."/>
            <person name="Villen J."/>
            <person name="Johnson A.D."/>
            <person name="Gygi S.P."/>
            <person name="Morgan D.O."/>
        </authorList>
    </citation>
    <scope>PHOSPHORYLATION [LARGE SCALE ANALYSIS] AT THR-704; SER-709; SER-733; SER-736; SER-737; SER-1044; SER-1048; SER-1064; SER-1421; SER-1531; SER-1538; SER-1542 AND SER-1565</scope>
    <scope>IDENTIFICATION BY MASS SPECTROMETRY [LARGE SCALE ANALYSIS]</scope>
</reference>
<reference key="9">
    <citation type="journal article" date="2010" name="Mol. Cell">
        <title>Initiation of the TORC1-regulated G0 program requires Igo1/2, which license specific mRNAs to evade degradation via the 5'-3' mRNA decay pathway.</title>
        <authorList>
            <person name="Talarek N."/>
            <person name="Cameroni E."/>
            <person name="Jaquenoud M."/>
            <person name="Luo X."/>
            <person name="Bontron S."/>
            <person name="Lippman S."/>
            <person name="Devgan G."/>
            <person name="Snyder M."/>
            <person name="Broach J.R."/>
            <person name="De Virgilio C."/>
        </authorList>
    </citation>
    <scope>FUNCTION</scope>
    <scope>INTERACTION WITH IGO1</scope>
</reference>
<evidence type="ECO:0000255" key="1">
    <source>
        <dbReference type="PROSITE-ProRule" id="PRU00159"/>
    </source>
</evidence>
<evidence type="ECO:0000255" key="2">
    <source>
        <dbReference type="PROSITE-ProRule" id="PRU00169"/>
    </source>
</evidence>
<evidence type="ECO:0000255" key="3">
    <source>
        <dbReference type="PROSITE-ProRule" id="PRU00618"/>
    </source>
</evidence>
<evidence type="ECO:0000255" key="4">
    <source>
        <dbReference type="PROSITE-ProRule" id="PRU10027"/>
    </source>
</evidence>
<evidence type="ECO:0000256" key="5">
    <source>
        <dbReference type="SAM" id="MobiDB-lite"/>
    </source>
</evidence>
<evidence type="ECO:0000269" key="6">
    <source>
    </source>
</evidence>
<evidence type="ECO:0000269" key="7">
    <source>
    </source>
</evidence>
<evidence type="ECO:0000269" key="8">
    <source>
    </source>
</evidence>
<evidence type="ECO:0007744" key="9">
    <source>
    </source>
</evidence>
<evidence type="ECO:0007744" key="10">
    <source>
    </source>
</evidence>
<evidence type="ECO:0007744" key="11">
    <source>
    </source>
</evidence>
<comment type="function">
    <text evidence="6 7 8">Protein kinase that positively regulates proper entry into stationary phase of cells under nutrient starvation conditions. Involved in glycogen and trehalose accumulation, derepression of stress-induced genes, induction of thermotolerance and starvation resistance, and proper G1 cell cycle arrest. Also involved in the activation of a meiotic genes activation pathway. Phosphorylates IGO1 and IGO2, both involved in the TORC1 control of gene expression and chronological life span.</text>
</comment>
<comment type="catalytic activity">
    <reaction>
        <text>L-seryl-[protein] + ATP = O-phospho-L-seryl-[protein] + ADP + H(+)</text>
        <dbReference type="Rhea" id="RHEA:17989"/>
        <dbReference type="Rhea" id="RHEA-COMP:9863"/>
        <dbReference type="Rhea" id="RHEA-COMP:11604"/>
        <dbReference type="ChEBI" id="CHEBI:15378"/>
        <dbReference type="ChEBI" id="CHEBI:29999"/>
        <dbReference type="ChEBI" id="CHEBI:30616"/>
        <dbReference type="ChEBI" id="CHEBI:83421"/>
        <dbReference type="ChEBI" id="CHEBI:456216"/>
        <dbReference type="EC" id="2.7.11.1"/>
    </reaction>
</comment>
<comment type="catalytic activity">
    <reaction>
        <text>L-threonyl-[protein] + ATP = O-phospho-L-threonyl-[protein] + ADP + H(+)</text>
        <dbReference type="Rhea" id="RHEA:46608"/>
        <dbReference type="Rhea" id="RHEA-COMP:11060"/>
        <dbReference type="Rhea" id="RHEA-COMP:11605"/>
        <dbReference type="ChEBI" id="CHEBI:15378"/>
        <dbReference type="ChEBI" id="CHEBI:30013"/>
        <dbReference type="ChEBI" id="CHEBI:30616"/>
        <dbReference type="ChEBI" id="CHEBI:61977"/>
        <dbReference type="ChEBI" id="CHEBI:456216"/>
        <dbReference type="EC" id="2.7.11.1"/>
    </reaction>
</comment>
<comment type="activity regulation">
    <text evidence="8">Kinase activity is inhibited by phosphorylation by cAMP-dependent protein kinase (PKA).</text>
</comment>
<comment type="subunit">
    <text evidence="7">Interacts with the cyclin-dependent kinase (CDK) PHO85 and IGO1.</text>
</comment>
<comment type="interaction">
    <interactant intactId="EBI-15150">
        <id>P43565</id>
    </interactant>
    <interactant intactId="EBI-9723">
        <id>P13186</id>
        <label>KIN2</label>
    </interactant>
    <organismsDiffer>false</organismsDiffer>
    <experiments>2</experiments>
</comment>
<comment type="subcellular location">
    <subcellularLocation>
        <location evidence="6">Cytoplasm</location>
    </subcellularLocation>
    <subcellularLocation>
        <location evidence="6">Nucleus</location>
    </subcellularLocation>
</comment>
<comment type="PTM">
    <text evidence="6">Autophosphorylated. Phosphorylation by PKA strongly inhibits kinase activity. Phosphorylation by cyclin-CDK PHO80-PHO85 under favorable growth condition causes inactivation of RIM15 by promoting its export to the cytoplasm.</text>
</comment>
<comment type="similarity">
    <text evidence="1">Belongs to the protein kinase superfamily. Ser/Thr protein kinase family.</text>
</comment>
<feature type="chain" id="PRO_0000086605" description="Serine/threonine-protein kinase RIM15">
    <location>
        <begin position="1"/>
        <end position="1770"/>
    </location>
</feature>
<feature type="domain" description="Protein kinase" evidence="1">
    <location>
        <begin position="794"/>
        <end position="1254"/>
    </location>
</feature>
<feature type="domain" description="AGC-kinase C-terminal" evidence="3">
    <location>
        <begin position="1255"/>
        <end position="1320"/>
    </location>
</feature>
<feature type="domain" description="Response regulatory" evidence="2">
    <location>
        <begin position="1636"/>
        <end position="1750"/>
    </location>
</feature>
<feature type="region of interest" description="Disordered" evidence="5">
    <location>
        <begin position="334"/>
        <end position="358"/>
    </location>
</feature>
<feature type="region of interest" description="Disordered" evidence="5">
    <location>
        <begin position="530"/>
        <end position="563"/>
    </location>
</feature>
<feature type="region of interest" description="Disordered" evidence="5">
    <location>
        <begin position="583"/>
        <end position="694"/>
    </location>
</feature>
<feature type="region of interest" description="Disordered" evidence="5">
    <location>
        <begin position="970"/>
        <end position="1032"/>
    </location>
</feature>
<feature type="region of interest" description="Disordered" evidence="5">
    <location>
        <begin position="1378"/>
        <end position="1403"/>
    </location>
</feature>
<feature type="region of interest" description="Disordered" evidence="5">
    <location>
        <begin position="1448"/>
        <end position="1507"/>
    </location>
</feature>
<feature type="region of interest" description="Disordered" evidence="5">
    <location>
        <begin position="1519"/>
        <end position="1572"/>
    </location>
</feature>
<feature type="compositionally biased region" description="Low complexity" evidence="5">
    <location>
        <begin position="343"/>
        <end position="358"/>
    </location>
</feature>
<feature type="compositionally biased region" description="Polar residues" evidence="5">
    <location>
        <begin position="583"/>
        <end position="601"/>
    </location>
</feature>
<feature type="compositionally biased region" description="Low complexity" evidence="5">
    <location>
        <begin position="611"/>
        <end position="632"/>
    </location>
</feature>
<feature type="compositionally biased region" description="Basic and acidic residues" evidence="5">
    <location>
        <begin position="637"/>
        <end position="660"/>
    </location>
</feature>
<feature type="compositionally biased region" description="Low complexity" evidence="5">
    <location>
        <begin position="669"/>
        <end position="692"/>
    </location>
</feature>
<feature type="compositionally biased region" description="Low complexity" evidence="5">
    <location>
        <begin position="970"/>
        <end position="980"/>
    </location>
</feature>
<feature type="compositionally biased region" description="Polar residues" evidence="5">
    <location>
        <begin position="981"/>
        <end position="990"/>
    </location>
</feature>
<feature type="compositionally biased region" description="Low complexity" evidence="5">
    <location>
        <begin position="1014"/>
        <end position="1031"/>
    </location>
</feature>
<feature type="compositionally biased region" description="Low complexity" evidence="5">
    <location>
        <begin position="1378"/>
        <end position="1391"/>
    </location>
</feature>
<feature type="compositionally biased region" description="Polar residues" evidence="5">
    <location>
        <begin position="1392"/>
        <end position="1401"/>
    </location>
</feature>
<feature type="compositionally biased region" description="Low complexity" evidence="5">
    <location>
        <begin position="1463"/>
        <end position="1481"/>
    </location>
</feature>
<feature type="active site" description="Proton acceptor" evidence="1 4">
    <location>
        <position position="918"/>
    </location>
</feature>
<feature type="binding site" evidence="1">
    <location>
        <begin position="800"/>
        <end position="808"/>
    </location>
    <ligand>
        <name>ATP</name>
        <dbReference type="ChEBI" id="CHEBI:30616"/>
    </ligand>
</feature>
<feature type="binding site" evidence="1">
    <location>
        <position position="823"/>
    </location>
    <ligand>
        <name>ATP</name>
        <dbReference type="ChEBI" id="CHEBI:30616"/>
    </ligand>
</feature>
<feature type="modified residue" description="Phosphoserine" evidence="10">
    <location>
        <position position="380"/>
    </location>
</feature>
<feature type="modified residue" description="Phosphoserine" evidence="10">
    <location>
        <position position="476"/>
    </location>
</feature>
<feature type="modified residue" description="Phosphothreonine" evidence="10 11">
    <location>
        <position position="704"/>
    </location>
</feature>
<feature type="modified residue" description="Phosphoserine" evidence="11">
    <location>
        <position position="709"/>
    </location>
</feature>
<feature type="modified residue" description="Phosphoserine" evidence="9 11">
    <location>
        <position position="733"/>
    </location>
</feature>
<feature type="modified residue" description="Phosphoserine" evidence="11">
    <location>
        <position position="736"/>
    </location>
</feature>
<feature type="modified residue" description="Phosphoserine" evidence="11">
    <location>
        <position position="737"/>
    </location>
</feature>
<feature type="modified residue" description="Phosphothreonine" evidence="10">
    <location>
        <position position="747"/>
    </location>
</feature>
<feature type="modified residue" description="Phosphoserine" evidence="11">
    <location>
        <position position="1044"/>
    </location>
</feature>
<feature type="modified residue" description="Phosphoserine" evidence="11">
    <location>
        <position position="1048"/>
    </location>
</feature>
<feature type="modified residue" description="Phosphoserine" evidence="11">
    <location>
        <position position="1064"/>
    </location>
</feature>
<feature type="modified residue" description="Phosphothreonine; by PHO85" evidence="6">
    <location>
        <position position="1075"/>
    </location>
</feature>
<feature type="modified residue" description="Phosphoserine" evidence="11">
    <location>
        <position position="1421"/>
    </location>
</feature>
<feature type="modified residue" description="Phosphoserine" evidence="11">
    <location>
        <position position="1531"/>
    </location>
</feature>
<feature type="modified residue" description="Phosphoserine" evidence="11">
    <location>
        <position position="1538"/>
    </location>
</feature>
<feature type="modified residue" description="Phosphoserine" evidence="11">
    <location>
        <position position="1542"/>
    </location>
</feature>
<feature type="modified residue" description="Phosphoserine" evidence="11">
    <location>
        <position position="1565"/>
    </location>
</feature>
<feature type="modified residue" description="Phosphoserine" evidence="9">
    <location>
        <position position="1764"/>
    </location>
</feature>
<feature type="mutagenesis site" description="Loss of kinase activity." evidence="8">
    <original>K</original>
    <variation>Y</variation>
    <location>
        <position position="823"/>
    </location>
</feature>
<dbReference type="EC" id="2.7.11.1"/>
<dbReference type="EMBL" id="D50617">
    <property type="protein sequence ID" value="BAA09206.1"/>
    <property type="molecule type" value="Genomic_DNA"/>
</dbReference>
<dbReference type="EMBL" id="U83459">
    <property type="protein sequence ID" value="AAB64088.1"/>
    <property type="molecule type" value="Genomic_DNA"/>
</dbReference>
<dbReference type="EMBL" id="AJ001030">
    <property type="protein sequence ID" value="CAA04486.1"/>
    <property type="molecule type" value="Genomic_DNA"/>
</dbReference>
<dbReference type="EMBL" id="BK006940">
    <property type="protein sequence ID" value="DAA12408.1"/>
    <property type="molecule type" value="Genomic_DNA"/>
</dbReference>
<dbReference type="PIR" id="S56221">
    <property type="entry name" value="S56221"/>
</dbReference>
<dbReference type="RefSeq" id="NP_116620.1">
    <property type="nucleotide sequence ID" value="NM_001179933.1"/>
</dbReference>
<dbReference type="SMR" id="P43565"/>
<dbReference type="BioGRID" id="31114">
    <property type="interactions" value="396"/>
</dbReference>
<dbReference type="DIP" id="DIP-2510N"/>
<dbReference type="ELM" id="P43565"/>
<dbReference type="FunCoup" id="P43565">
    <property type="interactions" value="370"/>
</dbReference>
<dbReference type="IntAct" id="P43565">
    <property type="interactions" value="18"/>
</dbReference>
<dbReference type="MINT" id="P43565"/>
<dbReference type="STRING" id="4932.YFL033C"/>
<dbReference type="CarbonylDB" id="P43565"/>
<dbReference type="GlyGen" id="P43565">
    <property type="glycosylation" value="4 sites, 1 O-linked glycan (1 site)"/>
</dbReference>
<dbReference type="iPTMnet" id="P43565"/>
<dbReference type="PaxDb" id="4932-YFL033C"/>
<dbReference type="PeptideAtlas" id="P43565"/>
<dbReference type="EnsemblFungi" id="YFL033C_mRNA">
    <property type="protein sequence ID" value="YFL033C"/>
    <property type="gene ID" value="YFL033C"/>
</dbReference>
<dbReference type="GeneID" id="850511"/>
<dbReference type="KEGG" id="sce:YFL033C"/>
<dbReference type="AGR" id="SGD:S000001861"/>
<dbReference type="SGD" id="S000001861">
    <property type="gene designation" value="RIM15"/>
</dbReference>
<dbReference type="VEuPathDB" id="FungiDB:YFL033C"/>
<dbReference type="eggNOG" id="KOG0605">
    <property type="taxonomic scope" value="Eukaryota"/>
</dbReference>
<dbReference type="GeneTree" id="ENSGT00940000157002"/>
<dbReference type="HOGENOM" id="CLU_000709_4_0_1"/>
<dbReference type="InParanoid" id="P43565"/>
<dbReference type="OMA" id="AKLYYAF"/>
<dbReference type="OrthoDB" id="162894at2759"/>
<dbReference type="BioCyc" id="YEAST:G3O-30429-MONOMER"/>
<dbReference type="BRENDA" id="2.7.11.1">
    <property type="organism ID" value="984"/>
</dbReference>
<dbReference type="Reactome" id="R-SCE-2465910">
    <property type="pathway name" value="MASTL Facilitates Mitotic Progression"/>
</dbReference>
<dbReference type="BioGRID-ORCS" id="850511">
    <property type="hits" value="0 hits in 13 CRISPR screens"/>
</dbReference>
<dbReference type="PRO" id="PR:P43565"/>
<dbReference type="Proteomes" id="UP000002311">
    <property type="component" value="Chromosome VI"/>
</dbReference>
<dbReference type="RNAct" id="P43565">
    <property type="molecule type" value="protein"/>
</dbReference>
<dbReference type="GO" id="GO:0005737">
    <property type="term" value="C:cytoplasm"/>
    <property type="evidence" value="ECO:0000314"/>
    <property type="project" value="SGD"/>
</dbReference>
<dbReference type="GO" id="GO:0005634">
    <property type="term" value="C:nucleus"/>
    <property type="evidence" value="ECO:0000314"/>
    <property type="project" value="SGD"/>
</dbReference>
<dbReference type="GO" id="GO:0005524">
    <property type="term" value="F:ATP binding"/>
    <property type="evidence" value="ECO:0007669"/>
    <property type="project" value="UniProtKB-KW"/>
</dbReference>
<dbReference type="GO" id="GO:0004672">
    <property type="term" value="F:protein kinase activity"/>
    <property type="evidence" value="ECO:0000314"/>
    <property type="project" value="SGD"/>
</dbReference>
<dbReference type="GO" id="GO:0106310">
    <property type="term" value="F:protein serine kinase activity"/>
    <property type="evidence" value="ECO:0007669"/>
    <property type="project" value="RHEA"/>
</dbReference>
<dbReference type="GO" id="GO:0004674">
    <property type="term" value="F:protein serine/threonine kinase activity"/>
    <property type="evidence" value="ECO:0000314"/>
    <property type="project" value="SGD"/>
</dbReference>
<dbReference type="GO" id="GO:0034605">
    <property type="term" value="P:cellular response to heat"/>
    <property type="evidence" value="ECO:0000315"/>
    <property type="project" value="SGD"/>
</dbReference>
<dbReference type="GO" id="GO:0070301">
    <property type="term" value="P:cellular response to hydrogen peroxide"/>
    <property type="evidence" value="ECO:0000315"/>
    <property type="project" value="SGD"/>
</dbReference>
<dbReference type="GO" id="GO:0006995">
    <property type="term" value="P:cellular response to nitrogen starvation"/>
    <property type="evidence" value="ECO:0000315"/>
    <property type="project" value="SGD"/>
</dbReference>
<dbReference type="GO" id="GO:0034599">
    <property type="term" value="P:cellular response to oxidative stress"/>
    <property type="evidence" value="ECO:0000315"/>
    <property type="project" value="SGD"/>
</dbReference>
<dbReference type="GO" id="GO:0035556">
    <property type="term" value="P:intracellular signal transduction"/>
    <property type="evidence" value="ECO:0000318"/>
    <property type="project" value="GO_Central"/>
</dbReference>
<dbReference type="GO" id="GO:0051321">
    <property type="term" value="P:meiotic cell cycle"/>
    <property type="evidence" value="ECO:0000315"/>
    <property type="project" value="SGD"/>
</dbReference>
<dbReference type="GO" id="GO:0000160">
    <property type="term" value="P:phosphorelay signal transduction system"/>
    <property type="evidence" value="ECO:0007669"/>
    <property type="project" value="InterPro"/>
</dbReference>
<dbReference type="GO" id="GO:0010508">
    <property type="term" value="P:positive regulation of autophagy"/>
    <property type="evidence" value="ECO:0000315"/>
    <property type="project" value="SGD"/>
</dbReference>
<dbReference type="GO" id="GO:1903452">
    <property type="term" value="P:positive regulation of G1 to G0 transition"/>
    <property type="evidence" value="ECO:0000315"/>
    <property type="project" value="SGD"/>
</dbReference>
<dbReference type="GO" id="GO:1901992">
    <property type="term" value="P:positive regulation of mitotic cell cycle phase transition"/>
    <property type="evidence" value="ECO:0000315"/>
    <property type="project" value="SGD"/>
</dbReference>
<dbReference type="GO" id="GO:0045944">
    <property type="term" value="P:positive regulation of transcription by RNA polymerase II"/>
    <property type="evidence" value="ECO:0000315"/>
    <property type="project" value="SGD"/>
</dbReference>
<dbReference type="CDD" id="cd17546">
    <property type="entry name" value="REC_hyHK_CKI1_RcsC-like"/>
    <property type="match status" value="1"/>
</dbReference>
<dbReference type="FunFam" id="1.10.510.10:FF:000340">
    <property type="entry name" value="Serine threonine protein kinase"/>
    <property type="match status" value="1"/>
</dbReference>
<dbReference type="FunFam" id="3.30.200.20:FF:001008">
    <property type="entry name" value="Serine/threonine-protein kinase cek1"/>
    <property type="match status" value="1"/>
</dbReference>
<dbReference type="FunFam" id="3.40.50.2300:FF:000504">
    <property type="entry name" value="Serine/threonine-protein kinase RIM15"/>
    <property type="match status" value="1"/>
</dbReference>
<dbReference type="Gene3D" id="3.40.50.2300">
    <property type="match status" value="1"/>
</dbReference>
<dbReference type="Gene3D" id="3.30.200.20">
    <property type="entry name" value="Phosphorylase Kinase, domain 1"/>
    <property type="match status" value="2"/>
</dbReference>
<dbReference type="Gene3D" id="1.10.510.10">
    <property type="entry name" value="Transferase(Phosphotransferase) domain 1"/>
    <property type="match status" value="2"/>
</dbReference>
<dbReference type="InterPro" id="IPR000961">
    <property type="entry name" value="AGC-kinase_C"/>
</dbReference>
<dbReference type="InterPro" id="IPR011006">
    <property type="entry name" value="CheY-like_superfamily"/>
</dbReference>
<dbReference type="InterPro" id="IPR011009">
    <property type="entry name" value="Kinase-like_dom_sf"/>
</dbReference>
<dbReference type="InterPro" id="IPR000719">
    <property type="entry name" value="Prot_kinase_dom"/>
</dbReference>
<dbReference type="InterPro" id="IPR008271">
    <property type="entry name" value="Ser/Thr_kinase_AS"/>
</dbReference>
<dbReference type="InterPro" id="IPR050236">
    <property type="entry name" value="Ser_Thr_kinase_AGC"/>
</dbReference>
<dbReference type="InterPro" id="IPR001789">
    <property type="entry name" value="Sig_transdc_resp-reg_receiver"/>
</dbReference>
<dbReference type="PANTHER" id="PTHR24356">
    <property type="entry name" value="SERINE/THREONINE-PROTEIN KINASE"/>
    <property type="match status" value="1"/>
</dbReference>
<dbReference type="PANTHER" id="PTHR24356:SF1">
    <property type="entry name" value="SERINE_THREONINE-PROTEIN KINASE GREATWALL"/>
    <property type="match status" value="1"/>
</dbReference>
<dbReference type="Pfam" id="PF00069">
    <property type="entry name" value="Pkinase"/>
    <property type="match status" value="2"/>
</dbReference>
<dbReference type="SMART" id="SM00448">
    <property type="entry name" value="REC"/>
    <property type="match status" value="1"/>
</dbReference>
<dbReference type="SMART" id="SM00133">
    <property type="entry name" value="S_TK_X"/>
    <property type="match status" value="1"/>
</dbReference>
<dbReference type="SMART" id="SM00220">
    <property type="entry name" value="S_TKc"/>
    <property type="match status" value="1"/>
</dbReference>
<dbReference type="SUPFAM" id="SSF52172">
    <property type="entry name" value="CheY-like"/>
    <property type="match status" value="1"/>
</dbReference>
<dbReference type="SUPFAM" id="SSF56112">
    <property type="entry name" value="Protein kinase-like (PK-like)"/>
    <property type="match status" value="1"/>
</dbReference>
<dbReference type="PROSITE" id="PS51285">
    <property type="entry name" value="AGC_KINASE_CTER"/>
    <property type="match status" value="1"/>
</dbReference>
<dbReference type="PROSITE" id="PS50011">
    <property type="entry name" value="PROTEIN_KINASE_DOM"/>
    <property type="match status" value="1"/>
</dbReference>
<dbReference type="PROSITE" id="PS00108">
    <property type="entry name" value="PROTEIN_KINASE_ST"/>
    <property type="match status" value="1"/>
</dbReference>
<dbReference type="PROSITE" id="PS50110">
    <property type="entry name" value="RESPONSE_REGULATORY"/>
    <property type="match status" value="1"/>
</dbReference>
<name>RIM15_YEAST</name>
<proteinExistence type="evidence at protein level"/>
<keyword id="KW-0067">ATP-binding</keyword>
<keyword id="KW-0963">Cytoplasm</keyword>
<keyword id="KW-0418">Kinase</keyword>
<keyword id="KW-0469">Meiosis</keyword>
<keyword id="KW-0547">Nucleotide-binding</keyword>
<keyword id="KW-0539">Nucleus</keyword>
<keyword id="KW-0597">Phosphoprotein</keyword>
<keyword id="KW-1185">Reference proteome</keyword>
<keyword id="KW-0723">Serine/threonine-protein kinase</keyword>
<keyword id="KW-0808">Transferase</keyword>